<comment type="function">
    <text evidence="1">Catalyzes the isomerization between 2-isopropylmalate and 3-isopropylmalate, via the formation of 2-isopropylmaleate.</text>
</comment>
<comment type="catalytic activity">
    <reaction evidence="1">
        <text>(2R,3S)-3-isopropylmalate = (2S)-2-isopropylmalate</text>
        <dbReference type="Rhea" id="RHEA:32287"/>
        <dbReference type="ChEBI" id="CHEBI:1178"/>
        <dbReference type="ChEBI" id="CHEBI:35121"/>
        <dbReference type="EC" id="4.2.1.33"/>
    </reaction>
</comment>
<comment type="cofactor">
    <cofactor evidence="1">
        <name>[4Fe-4S] cluster</name>
        <dbReference type="ChEBI" id="CHEBI:49883"/>
    </cofactor>
    <text evidence="1">Binds 1 [4Fe-4S] cluster per subunit.</text>
</comment>
<comment type="pathway">
    <text evidence="1">Amino-acid biosynthesis; L-leucine biosynthesis; L-leucine from 3-methyl-2-oxobutanoate: step 2/4.</text>
</comment>
<comment type="subunit">
    <text evidence="1">Heterodimer of LeuC and LeuD.</text>
</comment>
<comment type="similarity">
    <text evidence="1">Belongs to the aconitase/IPM isomerase family. LeuC type 1 subfamily.</text>
</comment>
<accession>B4F196</accession>
<evidence type="ECO:0000255" key="1">
    <source>
        <dbReference type="HAMAP-Rule" id="MF_01026"/>
    </source>
</evidence>
<dbReference type="EC" id="4.2.1.33" evidence="1"/>
<dbReference type="EMBL" id="AM942759">
    <property type="protein sequence ID" value="CAR44169.1"/>
    <property type="molecule type" value="Genomic_DNA"/>
</dbReference>
<dbReference type="RefSeq" id="WP_004244139.1">
    <property type="nucleotide sequence ID" value="NC_010554.1"/>
</dbReference>
<dbReference type="SMR" id="B4F196"/>
<dbReference type="EnsemblBacteria" id="CAR44169">
    <property type="protein sequence ID" value="CAR44169"/>
    <property type="gene ID" value="PMI2086"/>
</dbReference>
<dbReference type="GeneID" id="6800024"/>
<dbReference type="KEGG" id="pmr:PMI2086"/>
<dbReference type="eggNOG" id="COG0065">
    <property type="taxonomic scope" value="Bacteria"/>
</dbReference>
<dbReference type="HOGENOM" id="CLU_006714_3_4_6"/>
<dbReference type="UniPathway" id="UPA00048">
    <property type="reaction ID" value="UER00071"/>
</dbReference>
<dbReference type="Proteomes" id="UP000008319">
    <property type="component" value="Chromosome"/>
</dbReference>
<dbReference type="GO" id="GO:0003861">
    <property type="term" value="F:3-isopropylmalate dehydratase activity"/>
    <property type="evidence" value="ECO:0007669"/>
    <property type="project" value="UniProtKB-UniRule"/>
</dbReference>
<dbReference type="GO" id="GO:0051539">
    <property type="term" value="F:4 iron, 4 sulfur cluster binding"/>
    <property type="evidence" value="ECO:0007669"/>
    <property type="project" value="UniProtKB-KW"/>
</dbReference>
<dbReference type="GO" id="GO:0046872">
    <property type="term" value="F:metal ion binding"/>
    <property type="evidence" value="ECO:0007669"/>
    <property type="project" value="UniProtKB-KW"/>
</dbReference>
<dbReference type="GO" id="GO:0009098">
    <property type="term" value="P:L-leucine biosynthetic process"/>
    <property type="evidence" value="ECO:0007669"/>
    <property type="project" value="UniProtKB-UniRule"/>
</dbReference>
<dbReference type="CDD" id="cd01583">
    <property type="entry name" value="IPMI"/>
    <property type="match status" value="1"/>
</dbReference>
<dbReference type="FunFam" id="3.30.499.10:FF:000006">
    <property type="entry name" value="3-isopropylmalate dehydratase large subunit"/>
    <property type="match status" value="1"/>
</dbReference>
<dbReference type="FunFam" id="3.30.499.10:FF:000007">
    <property type="entry name" value="3-isopropylmalate dehydratase large subunit"/>
    <property type="match status" value="1"/>
</dbReference>
<dbReference type="Gene3D" id="3.30.499.10">
    <property type="entry name" value="Aconitase, domain 3"/>
    <property type="match status" value="2"/>
</dbReference>
<dbReference type="HAMAP" id="MF_01026">
    <property type="entry name" value="LeuC_type1"/>
    <property type="match status" value="1"/>
</dbReference>
<dbReference type="InterPro" id="IPR004430">
    <property type="entry name" value="3-IsopropMal_deHydase_lsu"/>
</dbReference>
<dbReference type="InterPro" id="IPR015931">
    <property type="entry name" value="Acnase/IPM_dHydase_lsu_aba_1/3"/>
</dbReference>
<dbReference type="InterPro" id="IPR001030">
    <property type="entry name" value="Acoase/IPM_deHydtase_lsu_aba"/>
</dbReference>
<dbReference type="InterPro" id="IPR018136">
    <property type="entry name" value="Aconitase_4Fe-4S_BS"/>
</dbReference>
<dbReference type="InterPro" id="IPR036008">
    <property type="entry name" value="Aconitase_4Fe-4S_dom"/>
</dbReference>
<dbReference type="InterPro" id="IPR050067">
    <property type="entry name" value="IPM_dehydratase_rel_enz"/>
</dbReference>
<dbReference type="InterPro" id="IPR033941">
    <property type="entry name" value="IPMI_cat"/>
</dbReference>
<dbReference type="NCBIfam" id="TIGR00170">
    <property type="entry name" value="leuC"/>
    <property type="match status" value="1"/>
</dbReference>
<dbReference type="NCBIfam" id="NF004016">
    <property type="entry name" value="PRK05478.1"/>
    <property type="match status" value="1"/>
</dbReference>
<dbReference type="NCBIfam" id="NF009116">
    <property type="entry name" value="PRK12466.1"/>
    <property type="match status" value="1"/>
</dbReference>
<dbReference type="PANTHER" id="PTHR43822:SF9">
    <property type="entry name" value="3-ISOPROPYLMALATE DEHYDRATASE"/>
    <property type="match status" value="1"/>
</dbReference>
<dbReference type="PANTHER" id="PTHR43822">
    <property type="entry name" value="HOMOACONITASE, MITOCHONDRIAL-RELATED"/>
    <property type="match status" value="1"/>
</dbReference>
<dbReference type="Pfam" id="PF00330">
    <property type="entry name" value="Aconitase"/>
    <property type="match status" value="1"/>
</dbReference>
<dbReference type="PRINTS" id="PR00415">
    <property type="entry name" value="ACONITASE"/>
</dbReference>
<dbReference type="SUPFAM" id="SSF53732">
    <property type="entry name" value="Aconitase iron-sulfur domain"/>
    <property type="match status" value="1"/>
</dbReference>
<dbReference type="PROSITE" id="PS00450">
    <property type="entry name" value="ACONITASE_1"/>
    <property type="match status" value="1"/>
</dbReference>
<dbReference type="PROSITE" id="PS01244">
    <property type="entry name" value="ACONITASE_2"/>
    <property type="match status" value="1"/>
</dbReference>
<gene>
    <name evidence="1" type="primary">leuC</name>
    <name type="ordered locus">PMI2086</name>
</gene>
<protein>
    <recommendedName>
        <fullName evidence="1">3-isopropylmalate dehydratase large subunit</fullName>
        <ecNumber evidence="1">4.2.1.33</ecNumber>
    </recommendedName>
    <alternativeName>
        <fullName evidence="1">Alpha-IPM isomerase</fullName>
        <shortName evidence="1">IPMI</shortName>
    </alternativeName>
    <alternativeName>
        <fullName evidence="1">Isopropylmalate isomerase</fullName>
    </alternativeName>
</protein>
<reference key="1">
    <citation type="journal article" date="2008" name="J. Bacteriol.">
        <title>Complete genome sequence of uropathogenic Proteus mirabilis, a master of both adherence and motility.</title>
        <authorList>
            <person name="Pearson M.M."/>
            <person name="Sebaihia M."/>
            <person name="Churcher C."/>
            <person name="Quail M.A."/>
            <person name="Seshasayee A.S."/>
            <person name="Luscombe N.M."/>
            <person name="Abdellah Z."/>
            <person name="Arrosmith C."/>
            <person name="Atkin B."/>
            <person name="Chillingworth T."/>
            <person name="Hauser H."/>
            <person name="Jagels K."/>
            <person name="Moule S."/>
            <person name="Mungall K."/>
            <person name="Norbertczak H."/>
            <person name="Rabbinowitsch E."/>
            <person name="Walker D."/>
            <person name="Whithead S."/>
            <person name="Thomson N.R."/>
            <person name="Rather P.N."/>
            <person name="Parkhill J."/>
            <person name="Mobley H.L.T."/>
        </authorList>
    </citation>
    <scope>NUCLEOTIDE SEQUENCE [LARGE SCALE GENOMIC DNA]</scope>
    <source>
        <strain>HI4320</strain>
    </source>
</reference>
<organism>
    <name type="scientific">Proteus mirabilis (strain HI4320)</name>
    <dbReference type="NCBI Taxonomy" id="529507"/>
    <lineage>
        <taxon>Bacteria</taxon>
        <taxon>Pseudomonadati</taxon>
        <taxon>Pseudomonadota</taxon>
        <taxon>Gammaproteobacteria</taxon>
        <taxon>Enterobacterales</taxon>
        <taxon>Morganellaceae</taxon>
        <taxon>Proteus</taxon>
    </lineage>
</organism>
<sequence>MGKTLYQKIYDAHVVREVANETPIIYIDRHLVHEVTSPQAFDGLRTKGRAVRQPNKTFATMDHNVSTQTKDINACGDMARIQMQELMKNCQEFGVTLYDLNHPYQGIVHVMGPEQGLTLPGMTIVCGDSHTATHGAFGALAFGIGTSEVEHVLATQTLKQSRAKTLKIEVQGKTANGITAKDIVLAIIGKLGSAGGTGYIIEFTGEAIEALSMEGRMTLCNMAIEMGAKAGLVAPDETTFAYLKGRQFAPQAPLWDEAVAYWKTLKSDEDAIFDATVTINAAEIAPQVTWGTNPGQVIAIDQIVPRLNSFNDPVERASAEKALAYMGLTEGVNLTDITIDKVFIGSCTNSRIEDLRAAAKIAKGHKVASHVQAIVVPGSGPVKAQAEAEGLDKIFIEAGFEWRLPGCSMCLAMNNDRLNPGERCASTSNRNFEGRQGRGGRTHLVSPAMAAAAAIHGHFADIRTFATVS</sequence>
<name>LEUC_PROMH</name>
<feature type="chain" id="PRO_1000135704" description="3-isopropylmalate dehydratase large subunit">
    <location>
        <begin position="1"/>
        <end position="469"/>
    </location>
</feature>
<feature type="binding site" evidence="1">
    <location>
        <position position="347"/>
    </location>
    <ligand>
        <name>[4Fe-4S] cluster</name>
        <dbReference type="ChEBI" id="CHEBI:49883"/>
    </ligand>
</feature>
<feature type="binding site" evidence="1">
    <location>
        <position position="407"/>
    </location>
    <ligand>
        <name>[4Fe-4S] cluster</name>
        <dbReference type="ChEBI" id="CHEBI:49883"/>
    </ligand>
</feature>
<feature type="binding site" evidence="1">
    <location>
        <position position="410"/>
    </location>
    <ligand>
        <name>[4Fe-4S] cluster</name>
        <dbReference type="ChEBI" id="CHEBI:49883"/>
    </ligand>
</feature>
<proteinExistence type="inferred from homology"/>
<keyword id="KW-0004">4Fe-4S</keyword>
<keyword id="KW-0028">Amino-acid biosynthesis</keyword>
<keyword id="KW-0100">Branched-chain amino acid biosynthesis</keyword>
<keyword id="KW-0408">Iron</keyword>
<keyword id="KW-0411">Iron-sulfur</keyword>
<keyword id="KW-0432">Leucine biosynthesis</keyword>
<keyword id="KW-0456">Lyase</keyword>
<keyword id="KW-0479">Metal-binding</keyword>
<keyword id="KW-1185">Reference proteome</keyword>